<name>HGPRT_MYCPN</name>
<comment type="function">
    <text evidence="2">Purine salvage pathway enzyme that catalyzes the transfer of the ribosyl-5-phosphate group from 5-phospho-alpha-D-ribose 1-diphosphate (PRPP) to the N9 position of the 6-oxopurines hypoxanthine and guanine to form the corresponding ribonucleotides IMP (inosine 5'-monophosphate) and GMP (guanosine 5'-monophosphate), with the release of PPi.</text>
</comment>
<comment type="catalytic activity">
    <reaction evidence="2">
        <text>IMP + diphosphate = hypoxanthine + 5-phospho-alpha-D-ribose 1-diphosphate</text>
        <dbReference type="Rhea" id="RHEA:17973"/>
        <dbReference type="ChEBI" id="CHEBI:17368"/>
        <dbReference type="ChEBI" id="CHEBI:33019"/>
        <dbReference type="ChEBI" id="CHEBI:58017"/>
        <dbReference type="ChEBI" id="CHEBI:58053"/>
        <dbReference type="EC" id="2.4.2.8"/>
    </reaction>
    <physiologicalReaction direction="right-to-left" evidence="2">
        <dbReference type="Rhea" id="RHEA:17975"/>
    </physiologicalReaction>
</comment>
<comment type="catalytic activity">
    <reaction evidence="2">
        <text>GMP + diphosphate = guanine + 5-phospho-alpha-D-ribose 1-diphosphate</text>
        <dbReference type="Rhea" id="RHEA:25424"/>
        <dbReference type="ChEBI" id="CHEBI:16235"/>
        <dbReference type="ChEBI" id="CHEBI:33019"/>
        <dbReference type="ChEBI" id="CHEBI:58017"/>
        <dbReference type="ChEBI" id="CHEBI:58115"/>
        <dbReference type="EC" id="2.4.2.8"/>
    </reaction>
    <physiologicalReaction direction="right-to-left" evidence="2">
        <dbReference type="Rhea" id="RHEA:25426"/>
    </physiologicalReaction>
</comment>
<comment type="cofactor">
    <cofactor evidence="2">
        <name>Mg(2+)</name>
        <dbReference type="ChEBI" id="CHEBI:18420"/>
    </cofactor>
</comment>
<comment type="pathway">
    <text evidence="2">Purine metabolism; IMP biosynthesis via salvage pathway; IMP from hypoxanthine: step 1/1.</text>
</comment>
<comment type="pathway">
    <text evidence="2">Purine metabolism; GMP biosynthesis via salvage pathway; GMP from guanine: step 1/1.</text>
</comment>
<comment type="subcellular location">
    <subcellularLocation>
        <location>Cytoplasm</location>
    </subcellularLocation>
</comment>
<comment type="similarity">
    <text evidence="3">Belongs to the purine/pyrimidine phosphoribosyltransferase family.</text>
</comment>
<feature type="chain" id="PRO_0000139606" description="Hypoxanthine-guanine phosphoribosyltransferase">
    <location>
        <begin position="1"/>
        <end position="175"/>
    </location>
</feature>
<feature type="active site" description="Proton acceptor" evidence="1">
    <location>
        <position position="100"/>
    </location>
</feature>
<feature type="binding site" evidence="2">
    <location>
        <position position="40"/>
    </location>
    <ligand>
        <name>diphosphate</name>
        <dbReference type="ChEBI" id="CHEBI:33019"/>
    </ligand>
</feature>
<feature type="binding site" evidence="2">
    <location>
        <position position="41"/>
    </location>
    <ligand>
        <name>diphosphate</name>
        <dbReference type="ChEBI" id="CHEBI:33019"/>
    </ligand>
</feature>
<feature type="binding site" evidence="2">
    <location>
        <position position="96"/>
    </location>
    <ligand>
        <name>Mg(2+)</name>
        <dbReference type="ChEBI" id="CHEBI:18420"/>
    </ligand>
</feature>
<feature type="binding site" evidence="2">
    <location>
        <position position="97"/>
    </location>
    <ligand>
        <name>Mg(2+)</name>
        <dbReference type="ChEBI" id="CHEBI:18420"/>
    </ligand>
</feature>
<feature type="binding site" evidence="2">
    <location>
        <position position="128"/>
    </location>
    <ligand>
        <name>GMP</name>
        <dbReference type="ChEBI" id="CHEBI:58115"/>
    </ligand>
</feature>
<feature type="binding site" evidence="2">
    <location>
        <begin position="149"/>
        <end position="150"/>
    </location>
    <ligand>
        <name>GMP</name>
        <dbReference type="ChEBI" id="CHEBI:58115"/>
    </ligand>
</feature>
<feature type="binding site" evidence="2">
    <location>
        <position position="156"/>
    </location>
    <ligand>
        <name>GMP</name>
        <dbReference type="ChEBI" id="CHEBI:58115"/>
    </ligand>
</feature>
<feature type="binding site" evidence="2">
    <location>
        <position position="162"/>
    </location>
    <ligand>
        <name>diphosphate</name>
        <dbReference type="ChEBI" id="CHEBI:33019"/>
    </ligand>
</feature>
<gene>
    <name type="primary">hpt</name>
    <name type="ordered locus">MPN_672</name>
    <name type="ORF">MP170</name>
</gene>
<sequence length="175" mass="19620">MGIKSIIIDQKQVEAGCNAALKWCNEHFAGKQVIVLGILKGCIPFLGKLISQFTFDLQLDFVAVASYHGGSRQQEAPKIVLDMSHDPKGKDILLIEDIVDSGRSIKLVLDLLHTRKAKSVILVSFIEKLKPREADIKVDYSCFKNQDEFLVGFGLDYQGFYRNLPYVGVFDPEDN</sequence>
<accession>P75119</accession>
<reference key="1">
    <citation type="journal article" date="1996" name="Nucleic Acids Res.">
        <title>Complete sequence analysis of the genome of the bacterium Mycoplasma pneumoniae.</title>
        <authorList>
            <person name="Himmelreich R."/>
            <person name="Hilbert H."/>
            <person name="Plagens H."/>
            <person name="Pirkl E."/>
            <person name="Li B.-C."/>
            <person name="Herrmann R."/>
        </authorList>
    </citation>
    <scope>NUCLEOTIDE SEQUENCE [LARGE SCALE GENOMIC DNA]</scope>
    <source>
        <strain>ATCC 29342 / M129 / Subtype 1</strain>
    </source>
</reference>
<protein>
    <recommendedName>
        <fullName>Hypoxanthine-guanine phosphoribosyltransferase</fullName>
        <shortName>HGPRT</shortName>
        <shortName>HGPRTase</shortName>
        <ecNumber evidence="2">2.4.2.8</ecNumber>
    </recommendedName>
</protein>
<proteinExistence type="inferred from homology"/>
<dbReference type="EC" id="2.4.2.8" evidence="2"/>
<dbReference type="EMBL" id="U00089">
    <property type="protein sequence ID" value="AAB95818.1"/>
    <property type="molecule type" value="Genomic_DNA"/>
</dbReference>
<dbReference type="PIR" id="S73496">
    <property type="entry name" value="S73496"/>
</dbReference>
<dbReference type="RefSeq" id="NP_110361.1">
    <property type="nucleotide sequence ID" value="NC_000912.1"/>
</dbReference>
<dbReference type="RefSeq" id="WP_010875029.1">
    <property type="nucleotide sequence ID" value="NZ_OU342337.1"/>
</dbReference>
<dbReference type="SMR" id="P75119"/>
<dbReference type="STRING" id="272634.MPN_672"/>
<dbReference type="EnsemblBacteria" id="AAB95818">
    <property type="protein sequence ID" value="AAB95818"/>
    <property type="gene ID" value="MPN_672"/>
</dbReference>
<dbReference type="KEGG" id="mpn:MPN_672"/>
<dbReference type="PATRIC" id="fig|272634.6.peg.739"/>
<dbReference type="HOGENOM" id="CLU_073615_0_1_14"/>
<dbReference type="OrthoDB" id="9802824at2"/>
<dbReference type="BioCyc" id="MPNE272634:G1GJ3-1076-MONOMER"/>
<dbReference type="UniPathway" id="UPA00591">
    <property type="reaction ID" value="UER00648"/>
</dbReference>
<dbReference type="UniPathway" id="UPA00909">
    <property type="reaction ID" value="UER00887"/>
</dbReference>
<dbReference type="Proteomes" id="UP000000808">
    <property type="component" value="Chromosome"/>
</dbReference>
<dbReference type="GO" id="GO:0005829">
    <property type="term" value="C:cytosol"/>
    <property type="evidence" value="ECO:0007669"/>
    <property type="project" value="TreeGrafter"/>
</dbReference>
<dbReference type="GO" id="GO:0052657">
    <property type="term" value="F:guanine phosphoribosyltransferase activity"/>
    <property type="evidence" value="ECO:0007669"/>
    <property type="project" value="RHEA"/>
</dbReference>
<dbReference type="GO" id="GO:0004422">
    <property type="term" value="F:hypoxanthine phosphoribosyltransferase activity"/>
    <property type="evidence" value="ECO:0007669"/>
    <property type="project" value="InterPro"/>
</dbReference>
<dbReference type="GO" id="GO:0000287">
    <property type="term" value="F:magnesium ion binding"/>
    <property type="evidence" value="ECO:0007669"/>
    <property type="project" value="TreeGrafter"/>
</dbReference>
<dbReference type="GO" id="GO:0000166">
    <property type="term" value="F:nucleotide binding"/>
    <property type="evidence" value="ECO:0007669"/>
    <property type="project" value="UniProtKB-KW"/>
</dbReference>
<dbReference type="GO" id="GO:0032263">
    <property type="term" value="P:GMP salvage"/>
    <property type="evidence" value="ECO:0007669"/>
    <property type="project" value="UniProtKB-UniPathway"/>
</dbReference>
<dbReference type="GO" id="GO:0006178">
    <property type="term" value="P:guanine salvage"/>
    <property type="evidence" value="ECO:0007669"/>
    <property type="project" value="TreeGrafter"/>
</dbReference>
<dbReference type="GO" id="GO:0046100">
    <property type="term" value="P:hypoxanthine metabolic process"/>
    <property type="evidence" value="ECO:0007669"/>
    <property type="project" value="TreeGrafter"/>
</dbReference>
<dbReference type="GO" id="GO:0032264">
    <property type="term" value="P:IMP salvage"/>
    <property type="evidence" value="ECO:0007669"/>
    <property type="project" value="UniProtKB-UniPathway"/>
</dbReference>
<dbReference type="GO" id="GO:0006166">
    <property type="term" value="P:purine ribonucleoside salvage"/>
    <property type="evidence" value="ECO:0007669"/>
    <property type="project" value="UniProtKB-KW"/>
</dbReference>
<dbReference type="CDD" id="cd06223">
    <property type="entry name" value="PRTases_typeI"/>
    <property type="match status" value="1"/>
</dbReference>
<dbReference type="Gene3D" id="3.40.50.2020">
    <property type="match status" value="1"/>
</dbReference>
<dbReference type="InterPro" id="IPR050408">
    <property type="entry name" value="HGPRT"/>
</dbReference>
<dbReference type="InterPro" id="IPR005904">
    <property type="entry name" value="Hxn_phspho_trans"/>
</dbReference>
<dbReference type="InterPro" id="IPR000836">
    <property type="entry name" value="PRibTrfase_dom"/>
</dbReference>
<dbReference type="InterPro" id="IPR029057">
    <property type="entry name" value="PRTase-like"/>
</dbReference>
<dbReference type="NCBIfam" id="TIGR01203">
    <property type="entry name" value="HGPRTase"/>
    <property type="match status" value="1"/>
</dbReference>
<dbReference type="PANTHER" id="PTHR43340:SF1">
    <property type="entry name" value="HYPOXANTHINE PHOSPHORIBOSYLTRANSFERASE"/>
    <property type="match status" value="1"/>
</dbReference>
<dbReference type="PANTHER" id="PTHR43340">
    <property type="entry name" value="HYPOXANTHINE-GUANINE PHOSPHORIBOSYLTRANSFERASE"/>
    <property type="match status" value="1"/>
</dbReference>
<dbReference type="Pfam" id="PF00156">
    <property type="entry name" value="Pribosyltran"/>
    <property type="match status" value="1"/>
</dbReference>
<dbReference type="SUPFAM" id="SSF53271">
    <property type="entry name" value="PRTase-like"/>
    <property type="match status" value="1"/>
</dbReference>
<dbReference type="PROSITE" id="PS00103">
    <property type="entry name" value="PUR_PYR_PR_TRANSFER"/>
    <property type="match status" value="1"/>
</dbReference>
<evidence type="ECO:0000250" key="1">
    <source>
        <dbReference type="UniProtKB" id="P0A9M2"/>
    </source>
</evidence>
<evidence type="ECO:0000250" key="2">
    <source>
        <dbReference type="UniProtKB" id="P9WHQ9"/>
    </source>
</evidence>
<evidence type="ECO:0000305" key="3"/>
<keyword id="KW-0963">Cytoplasm</keyword>
<keyword id="KW-0328">Glycosyltransferase</keyword>
<keyword id="KW-0460">Magnesium</keyword>
<keyword id="KW-0479">Metal-binding</keyword>
<keyword id="KW-0547">Nucleotide-binding</keyword>
<keyword id="KW-0660">Purine salvage</keyword>
<keyword id="KW-1185">Reference proteome</keyword>
<keyword id="KW-0808">Transferase</keyword>
<organism>
    <name type="scientific">Mycoplasma pneumoniae (strain ATCC 29342 / M129 / Subtype 1)</name>
    <name type="common">Mycoplasmoides pneumoniae</name>
    <dbReference type="NCBI Taxonomy" id="272634"/>
    <lineage>
        <taxon>Bacteria</taxon>
        <taxon>Bacillati</taxon>
        <taxon>Mycoplasmatota</taxon>
        <taxon>Mycoplasmoidales</taxon>
        <taxon>Mycoplasmoidaceae</taxon>
        <taxon>Mycoplasmoides</taxon>
    </lineage>
</organism>